<keyword id="KW-0678">Repressor</keyword>
<keyword id="KW-0346">Stress response</keyword>
<keyword id="KW-0804">Transcription</keyword>
<keyword id="KW-0805">Transcription regulation</keyword>
<feature type="chain" id="PRO_1000118286" description="Heat-inducible transcription repressor HrcA">
    <location>
        <begin position="1"/>
        <end position="338"/>
    </location>
</feature>
<protein>
    <recommendedName>
        <fullName evidence="1">Heat-inducible transcription repressor HrcA</fullName>
    </recommendedName>
</protein>
<proteinExistence type="inferred from homology"/>
<dbReference type="EMBL" id="CP001598">
    <property type="protein sequence ID" value="ACQ50146.1"/>
    <property type="molecule type" value="Genomic_DNA"/>
</dbReference>
<dbReference type="RefSeq" id="WP_000954959.1">
    <property type="nucleotide sequence ID" value="NC_012659.1"/>
</dbReference>
<dbReference type="SMR" id="C3P8M2"/>
<dbReference type="GeneID" id="45024193"/>
<dbReference type="KEGG" id="bai:BAA_4560"/>
<dbReference type="HOGENOM" id="CLU_050019_1_0_9"/>
<dbReference type="GO" id="GO:0003677">
    <property type="term" value="F:DNA binding"/>
    <property type="evidence" value="ECO:0007669"/>
    <property type="project" value="InterPro"/>
</dbReference>
<dbReference type="GO" id="GO:0045892">
    <property type="term" value="P:negative regulation of DNA-templated transcription"/>
    <property type="evidence" value="ECO:0007669"/>
    <property type="project" value="UniProtKB-UniRule"/>
</dbReference>
<dbReference type="FunFam" id="1.10.10.10:FF:000049">
    <property type="entry name" value="Heat-inducible transcription repressor HrcA"/>
    <property type="match status" value="1"/>
</dbReference>
<dbReference type="FunFam" id="3.30.390.60:FF:000001">
    <property type="entry name" value="Heat-inducible transcription repressor HrcA"/>
    <property type="match status" value="1"/>
</dbReference>
<dbReference type="Gene3D" id="3.30.450.40">
    <property type="match status" value="1"/>
</dbReference>
<dbReference type="Gene3D" id="3.30.390.60">
    <property type="entry name" value="Heat-inducible transcription repressor hrca homolog, domain 3"/>
    <property type="match status" value="1"/>
</dbReference>
<dbReference type="Gene3D" id="1.10.10.10">
    <property type="entry name" value="Winged helix-like DNA-binding domain superfamily/Winged helix DNA-binding domain"/>
    <property type="match status" value="1"/>
</dbReference>
<dbReference type="HAMAP" id="MF_00081">
    <property type="entry name" value="HrcA"/>
    <property type="match status" value="1"/>
</dbReference>
<dbReference type="InterPro" id="IPR029016">
    <property type="entry name" value="GAF-like_dom_sf"/>
</dbReference>
<dbReference type="InterPro" id="IPR002571">
    <property type="entry name" value="HrcA"/>
</dbReference>
<dbReference type="InterPro" id="IPR021153">
    <property type="entry name" value="HrcA_C"/>
</dbReference>
<dbReference type="InterPro" id="IPR036388">
    <property type="entry name" value="WH-like_DNA-bd_sf"/>
</dbReference>
<dbReference type="InterPro" id="IPR036390">
    <property type="entry name" value="WH_DNA-bd_sf"/>
</dbReference>
<dbReference type="InterPro" id="IPR023120">
    <property type="entry name" value="WHTH_transcript_rep_HrcA_IDD"/>
</dbReference>
<dbReference type="NCBIfam" id="TIGR00331">
    <property type="entry name" value="hrcA"/>
    <property type="match status" value="1"/>
</dbReference>
<dbReference type="PANTHER" id="PTHR34824">
    <property type="entry name" value="HEAT-INDUCIBLE TRANSCRIPTION REPRESSOR HRCA"/>
    <property type="match status" value="1"/>
</dbReference>
<dbReference type="PANTHER" id="PTHR34824:SF1">
    <property type="entry name" value="HEAT-INDUCIBLE TRANSCRIPTION REPRESSOR HRCA"/>
    <property type="match status" value="1"/>
</dbReference>
<dbReference type="Pfam" id="PF01628">
    <property type="entry name" value="HrcA"/>
    <property type="match status" value="1"/>
</dbReference>
<dbReference type="PIRSF" id="PIRSF005485">
    <property type="entry name" value="HrcA"/>
    <property type="match status" value="1"/>
</dbReference>
<dbReference type="SUPFAM" id="SSF55781">
    <property type="entry name" value="GAF domain-like"/>
    <property type="match status" value="1"/>
</dbReference>
<dbReference type="SUPFAM" id="SSF46785">
    <property type="entry name" value="Winged helix' DNA-binding domain"/>
    <property type="match status" value="1"/>
</dbReference>
<comment type="function">
    <text evidence="1">Negative regulator of class I heat shock genes (grpE-dnaK-dnaJ and groELS operons). Prevents heat-shock induction of these operons.</text>
</comment>
<comment type="similarity">
    <text evidence="1">Belongs to the HrcA family.</text>
</comment>
<evidence type="ECO:0000255" key="1">
    <source>
        <dbReference type="HAMAP-Rule" id="MF_00081"/>
    </source>
</evidence>
<reference key="1">
    <citation type="submission" date="2009-04" db="EMBL/GenBank/DDBJ databases">
        <title>Genome sequence of Bacillus anthracis A0248.</title>
        <authorList>
            <person name="Dodson R.J."/>
            <person name="Munk A.C."/>
            <person name="Bruce D."/>
            <person name="Detter C."/>
            <person name="Tapia R."/>
            <person name="Sutton G."/>
            <person name="Sims D."/>
            <person name="Brettin T."/>
        </authorList>
    </citation>
    <scope>NUCLEOTIDE SEQUENCE [LARGE SCALE GENOMIC DNA]</scope>
    <source>
        <strain>A0248</strain>
    </source>
</reference>
<organism>
    <name type="scientific">Bacillus anthracis (strain A0248)</name>
    <dbReference type="NCBI Taxonomy" id="592021"/>
    <lineage>
        <taxon>Bacteria</taxon>
        <taxon>Bacillati</taxon>
        <taxon>Bacillota</taxon>
        <taxon>Bacilli</taxon>
        <taxon>Bacillales</taxon>
        <taxon>Bacillaceae</taxon>
        <taxon>Bacillus</taxon>
        <taxon>Bacillus cereus group</taxon>
    </lineage>
</organism>
<name>HRCA_BACAA</name>
<sequence length="338" mass="37960">MLTERQLLILQTIIDDFIGSAQPVGSRTLAKKDEITYSSATIRNEMADLEELGFIEKTHSSSGRVPSEKGYRFYVDHLLAPQNLPNDEIVQIKDLFVERIFEAEKIAQQSAQILSELTNYTAIVLGPKLSTNKLKNVQIVPLDRQTAVAIIVTDTGHVQSKTITVPESVDLSDLEKMVNILNEKLSGVPMSELHNKIFKEIVTVLRGYVHNYDSAIKMLDGTFQVPLSEKIYFGGKANMLSQPEFHDIHKVRSLLTMIDNEAEFYDILRHKQVGIQVKIGRENSATAMEDCSLISATYSIGEEQLGTIAILGPTRMQYSRVISLLQLFTRQFTDGLKK</sequence>
<gene>
    <name evidence="1" type="primary">hrcA</name>
    <name type="ordered locus">BAA_4560</name>
</gene>
<accession>C3P8M2</accession>